<sequence length="361" mass="39826">MLYNLLLPHIHNSHIANLFHYITFRSGLAIIITLSLSFVTGPILIKFLRTLQKNGQPIRLDGPESHQTKAGTPTMGGIMIILSSCLATLLLADLTNKYIWITLFGFISFGIIGFMDDYAKVTKNNHYGVRGKSKLLLQGIISLIICILLEYTDKNPSHLLNIPFFKNLSLDLGYFYIVFAIFVIVGSSNAVNLTDGLDGLATVPIAFTAGSFALISYLVGNLIYSNYLQLTYIPNTGELTVLCAGLVGSCLGFLWFNAQPAEVFMGDTGSLSLGSILGIISVITKHEVVLSIVGGLFVVETTSVILQVYYFKATKGKRIFKMAPLHHHFEKHGWEESKVVIRFWIISVIFALIGLSSLKLR</sequence>
<comment type="function">
    <text evidence="1">Catalyzes the initial step of the lipid cycle reactions in the biosynthesis of the cell wall peptidoglycan: transfers peptidoglycan precursor phospho-MurNAc-pentapeptide from UDP-MurNAc-pentapeptide onto the lipid carrier undecaprenyl phosphate, yielding undecaprenyl-pyrophosphoryl-MurNAc-pentapeptide, known as lipid I.</text>
</comment>
<comment type="catalytic activity">
    <reaction evidence="1">
        <text>UDP-N-acetyl-alpha-D-muramoyl-L-alanyl-gamma-D-glutamyl-meso-2,6-diaminopimeloyl-D-alanyl-D-alanine + di-trans,octa-cis-undecaprenyl phosphate = di-trans,octa-cis-undecaprenyl diphospho-N-acetyl-alpha-D-muramoyl-L-alanyl-D-glutamyl-meso-2,6-diaminopimeloyl-D-alanyl-D-alanine + UMP</text>
        <dbReference type="Rhea" id="RHEA:28386"/>
        <dbReference type="ChEBI" id="CHEBI:57865"/>
        <dbReference type="ChEBI" id="CHEBI:60392"/>
        <dbReference type="ChEBI" id="CHEBI:61386"/>
        <dbReference type="ChEBI" id="CHEBI:61387"/>
        <dbReference type="EC" id="2.7.8.13"/>
    </reaction>
</comment>
<comment type="cofactor">
    <cofactor evidence="1">
        <name>Mg(2+)</name>
        <dbReference type="ChEBI" id="CHEBI:18420"/>
    </cofactor>
</comment>
<comment type="pathway">
    <text evidence="1">Cell wall biogenesis; peptidoglycan biosynthesis.</text>
</comment>
<comment type="subcellular location">
    <subcellularLocation>
        <location evidence="1">Cell inner membrane</location>
        <topology evidence="1">Multi-pass membrane protein</topology>
    </subcellularLocation>
</comment>
<comment type="similarity">
    <text evidence="1">Belongs to the glycosyltransferase 4 family. MraY subfamily.</text>
</comment>
<organism>
    <name type="scientific">Rickettsia canadensis (strain McKiel)</name>
    <dbReference type="NCBI Taxonomy" id="293613"/>
    <lineage>
        <taxon>Bacteria</taxon>
        <taxon>Pseudomonadati</taxon>
        <taxon>Pseudomonadota</taxon>
        <taxon>Alphaproteobacteria</taxon>
        <taxon>Rickettsiales</taxon>
        <taxon>Rickettsiaceae</taxon>
        <taxon>Rickettsieae</taxon>
        <taxon>Rickettsia</taxon>
        <taxon>belli group</taxon>
    </lineage>
</organism>
<name>MRAY_RICCK</name>
<accession>A8EY83</accession>
<keyword id="KW-0131">Cell cycle</keyword>
<keyword id="KW-0132">Cell division</keyword>
<keyword id="KW-0997">Cell inner membrane</keyword>
<keyword id="KW-1003">Cell membrane</keyword>
<keyword id="KW-0133">Cell shape</keyword>
<keyword id="KW-0961">Cell wall biogenesis/degradation</keyword>
<keyword id="KW-0460">Magnesium</keyword>
<keyword id="KW-0472">Membrane</keyword>
<keyword id="KW-0479">Metal-binding</keyword>
<keyword id="KW-0573">Peptidoglycan synthesis</keyword>
<keyword id="KW-0808">Transferase</keyword>
<keyword id="KW-0812">Transmembrane</keyword>
<keyword id="KW-1133">Transmembrane helix</keyword>
<dbReference type="EC" id="2.7.8.13" evidence="1"/>
<dbReference type="EMBL" id="CP000409">
    <property type="protein sequence ID" value="ABV73316.1"/>
    <property type="molecule type" value="Genomic_DNA"/>
</dbReference>
<dbReference type="RefSeq" id="WP_012148515.1">
    <property type="nucleotide sequence ID" value="NC_009879.1"/>
</dbReference>
<dbReference type="SMR" id="A8EY83"/>
<dbReference type="STRING" id="293613.A1E_01855"/>
<dbReference type="KEGG" id="rcm:A1E_01855"/>
<dbReference type="eggNOG" id="COG0472">
    <property type="taxonomic scope" value="Bacteria"/>
</dbReference>
<dbReference type="HOGENOM" id="CLU_023982_0_0_5"/>
<dbReference type="UniPathway" id="UPA00219"/>
<dbReference type="Proteomes" id="UP000007056">
    <property type="component" value="Chromosome"/>
</dbReference>
<dbReference type="GO" id="GO:0005886">
    <property type="term" value="C:plasma membrane"/>
    <property type="evidence" value="ECO:0007669"/>
    <property type="project" value="UniProtKB-SubCell"/>
</dbReference>
<dbReference type="GO" id="GO:0046872">
    <property type="term" value="F:metal ion binding"/>
    <property type="evidence" value="ECO:0007669"/>
    <property type="project" value="UniProtKB-KW"/>
</dbReference>
<dbReference type="GO" id="GO:0008963">
    <property type="term" value="F:phospho-N-acetylmuramoyl-pentapeptide-transferase activity"/>
    <property type="evidence" value="ECO:0007669"/>
    <property type="project" value="UniProtKB-UniRule"/>
</dbReference>
<dbReference type="GO" id="GO:0051992">
    <property type="term" value="F:UDP-N-acetylmuramoyl-L-alanyl-D-glutamyl-meso-2,6-diaminopimelyl-D-alanyl-D-alanine:undecaprenyl-phosphate transferase activity"/>
    <property type="evidence" value="ECO:0007669"/>
    <property type="project" value="RHEA"/>
</dbReference>
<dbReference type="GO" id="GO:0051301">
    <property type="term" value="P:cell division"/>
    <property type="evidence" value="ECO:0007669"/>
    <property type="project" value="UniProtKB-KW"/>
</dbReference>
<dbReference type="GO" id="GO:0071555">
    <property type="term" value="P:cell wall organization"/>
    <property type="evidence" value="ECO:0007669"/>
    <property type="project" value="UniProtKB-KW"/>
</dbReference>
<dbReference type="GO" id="GO:0009252">
    <property type="term" value="P:peptidoglycan biosynthetic process"/>
    <property type="evidence" value="ECO:0007669"/>
    <property type="project" value="UniProtKB-UniRule"/>
</dbReference>
<dbReference type="GO" id="GO:0008360">
    <property type="term" value="P:regulation of cell shape"/>
    <property type="evidence" value="ECO:0007669"/>
    <property type="project" value="UniProtKB-KW"/>
</dbReference>
<dbReference type="CDD" id="cd06852">
    <property type="entry name" value="GT_MraY"/>
    <property type="match status" value="1"/>
</dbReference>
<dbReference type="HAMAP" id="MF_00038">
    <property type="entry name" value="MraY"/>
    <property type="match status" value="1"/>
</dbReference>
<dbReference type="InterPro" id="IPR000715">
    <property type="entry name" value="Glycosyl_transferase_4"/>
</dbReference>
<dbReference type="InterPro" id="IPR003524">
    <property type="entry name" value="PNAcMuramoyl-5peptid_Trfase"/>
</dbReference>
<dbReference type="InterPro" id="IPR018480">
    <property type="entry name" value="PNAcMuramoyl-5peptid_Trfase_CS"/>
</dbReference>
<dbReference type="NCBIfam" id="TIGR00445">
    <property type="entry name" value="mraY"/>
    <property type="match status" value="1"/>
</dbReference>
<dbReference type="PANTHER" id="PTHR22926">
    <property type="entry name" value="PHOSPHO-N-ACETYLMURAMOYL-PENTAPEPTIDE-TRANSFERASE"/>
    <property type="match status" value="1"/>
</dbReference>
<dbReference type="PANTHER" id="PTHR22926:SF5">
    <property type="entry name" value="PHOSPHO-N-ACETYLMURAMOYL-PENTAPEPTIDE-TRANSFERASE HOMOLOG"/>
    <property type="match status" value="1"/>
</dbReference>
<dbReference type="Pfam" id="PF00953">
    <property type="entry name" value="Glycos_transf_4"/>
    <property type="match status" value="1"/>
</dbReference>
<dbReference type="Pfam" id="PF10555">
    <property type="entry name" value="MraY_sig1"/>
    <property type="match status" value="1"/>
</dbReference>
<dbReference type="PROSITE" id="PS01347">
    <property type="entry name" value="MRAY_1"/>
    <property type="match status" value="1"/>
</dbReference>
<dbReference type="PROSITE" id="PS01348">
    <property type="entry name" value="MRAY_2"/>
    <property type="match status" value="1"/>
</dbReference>
<proteinExistence type="inferred from homology"/>
<gene>
    <name evidence="1" type="primary">mraY</name>
    <name type="ordered locus">A1E_01855</name>
</gene>
<evidence type="ECO:0000255" key="1">
    <source>
        <dbReference type="HAMAP-Rule" id="MF_00038"/>
    </source>
</evidence>
<feature type="chain" id="PRO_1000003048" description="Phospho-N-acetylmuramoyl-pentapeptide-transferase">
    <location>
        <begin position="1"/>
        <end position="361"/>
    </location>
</feature>
<feature type="transmembrane region" description="Helical" evidence="1">
    <location>
        <begin position="28"/>
        <end position="48"/>
    </location>
</feature>
<feature type="transmembrane region" description="Helical" evidence="1">
    <location>
        <begin position="74"/>
        <end position="94"/>
    </location>
</feature>
<feature type="transmembrane region" description="Helical" evidence="1">
    <location>
        <begin position="99"/>
        <end position="119"/>
    </location>
</feature>
<feature type="transmembrane region" description="Helical" evidence="1">
    <location>
        <begin position="133"/>
        <end position="153"/>
    </location>
</feature>
<feature type="transmembrane region" description="Helical" evidence="1">
    <location>
        <begin position="168"/>
        <end position="188"/>
    </location>
</feature>
<feature type="transmembrane region" description="Helical" evidence="1">
    <location>
        <begin position="203"/>
        <end position="223"/>
    </location>
</feature>
<feature type="transmembrane region" description="Helical" evidence="1">
    <location>
        <begin position="236"/>
        <end position="256"/>
    </location>
</feature>
<feature type="transmembrane region" description="Helical" evidence="1">
    <location>
        <begin position="263"/>
        <end position="283"/>
    </location>
</feature>
<feature type="transmembrane region" description="Helical" evidence="1">
    <location>
        <begin position="288"/>
        <end position="308"/>
    </location>
</feature>
<feature type="transmembrane region" description="Helical" evidence="1">
    <location>
        <begin position="338"/>
        <end position="358"/>
    </location>
</feature>
<protein>
    <recommendedName>
        <fullName evidence="1">Phospho-N-acetylmuramoyl-pentapeptide-transferase</fullName>
        <ecNumber evidence="1">2.7.8.13</ecNumber>
    </recommendedName>
    <alternativeName>
        <fullName evidence="1">UDP-MurNAc-pentapeptide phosphotransferase</fullName>
    </alternativeName>
</protein>
<reference key="1">
    <citation type="submission" date="2007-09" db="EMBL/GenBank/DDBJ databases">
        <title>Complete genome sequence of Rickettsia canadensis.</title>
        <authorList>
            <person name="Madan A."/>
            <person name="Fahey J."/>
            <person name="Helton E."/>
            <person name="Ketteman M."/>
            <person name="Madan A."/>
            <person name="Rodrigues S."/>
            <person name="Sanchez A."/>
            <person name="Whiting M."/>
            <person name="Dasch G."/>
            <person name="Eremeeva M."/>
        </authorList>
    </citation>
    <scope>NUCLEOTIDE SEQUENCE [LARGE SCALE GENOMIC DNA]</scope>
    <source>
        <strain>McKiel</strain>
    </source>
</reference>